<proteinExistence type="inferred from homology"/>
<evidence type="ECO:0000255" key="1">
    <source>
        <dbReference type="HAMAP-Rule" id="MF_00015"/>
    </source>
</evidence>
<dbReference type="EC" id="3.4.21.88" evidence="1"/>
<dbReference type="EMBL" id="AF251129">
    <property type="protein sequence ID" value="AAQ14270.1"/>
    <property type="molecule type" value="Genomic_DNA"/>
</dbReference>
<dbReference type="SMR" id="P61605"/>
<dbReference type="MEROPS" id="S24.001"/>
<dbReference type="GO" id="GO:0003677">
    <property type="term" value="F:DNA binding"/>
    <property type="evidence" value="ECO:0007669"/>
    <property type="project" value="UniProtKB-UniRule"/>
</dbReference>
<dbReference type="GO" id="GO:0004252">
    <property type="term" value="F:serine-type endopeptidase activity"/>
    <property type="evidence" value="ECO:0007669"/>
    <property type="project" value="UniProtKB-UniRule"/>
</dbReference>
<dbReference type="GO" id="GO:0006281">
    <property type="term" value="P:DNA repair"/>
    <property type="evidence" value="ECO:0007669"/>
    <property type="project" value="UniProtKB-UniRule"/>
</dbReference>
<dbReference type="GO" id="GO:0006260">
    <property type="term" value="P:DNA replication"/>
    <property type="evidence" value="ECO:0007669"/>
    <property type="project" value="UniProtKB-UniRule"/>
</dbReference>
<dbReference type="GO" id="GO:0045892">
    <property type="term" value="P:negative regulation of DNA-templated transcription"/>
    <property type="evidence" value="ECO:0007669"/>
    <property type="project" value="UniProtKB-UniRule"/>
</dbReference>
<dbReference type="GO" id="GO:0006508">
    <property type="term" value="P:proteolysis"/>
    <property type="evidence" value="ECO:0007669"/>
    <property type="project" value="InterPro"/>
</dbReference>
<dbReference type="GO" id="GO:0009432">
    <property type="term" value="P:SOS response"/>
    <property type="evidence" value="ECO:0007669"/>
    <property type="project" value="UniProtKB-UniRule"/>
</dbReference>
<dbReference type="CDD" id="cd06529">
    <property type="entry name" value="S24_LexA-like"/>
    <property type="match status" value="1"/>
</dbReference>
<dbReference type="FunFam" id="2.10.109.10:FF:000001">
    <property type="entry name" value="LexA repressor"/>
    <property type="match status" value="1"/>
</dbReference>
<dbReference type="Gene3D" id="2.10.109.10">
    <property type="entry name" value="Umud Fragment, subunit A"/>
    <property type="match status" value="1"/>
</dbReference>
<dbReference type="Gene3D" id="1.10.10.10">
    <property type="entry name" value="Winged helix-like DNA-binding domain superfamily/Winged helix DNA-binding domain"/>
    <property type="match status" value="1"/>
</dbReference>
<dbReference type="HAMAP" id="MF_00015">
    <property type="entry name" value="LexA"/>
    <property type="match status" value="1"/>
</dbReference>
<dbReference type="InterPro" id="IPR006200">
    <property type="entry name" value="LexA"/>
</dbReference>
<dbReference type="InterPro" id="IPR039418">
    <property type="entry name" value="LexA-like"/>
</dbReference>
<dbReference type="InterPro" id="IPR036286">
    <property type="entry name" value="LexA/Signal_pep-like_sf"/>
</dbReference>
<dbReference type="InterPro" id="IPR006199">
    <property type="entry name" value="LexA_DNA-bd_dom"/>
</dbReference>
<dbReference type="InterPro" id="IPR050077">
    <property type="entry name" value="LexA_repressor"/>
</dbReference>
<dbReference type="InterPro" id="IPR006197">
    <property type="entry name" value="Peptidase_S24_LexA"/>
</dbReference>
<dbReference type="InterPro" id="IPR015927">
    <property type="entry name" value="Peptidase_S24_S26A/B/C"/>
</dbReference>
<dbReference type="InterPro" id="IPR036388">
    <property type="entry name" value="WH-like_DNA-bd_sf"/>
</dbReference>
<dbReference type="InterPro" id="IPR036390">
    <property type="entry name" value="WH_DNA-bd_sf"/>
</dbReference>
<dbReference type="NCBIfam" id="TIGR00498">
    <property type="entry name" value="lexA"/>
    <property type="match status" value="1"/>
</dbReference>
<dbReference type="PANTHER" id="PTHR33516">
    <property type="entry name" value="LEXA REPRESSOR"/>
    <property type="match status" value="1"/>
</dbReference>
<dbReference type="PANTHER" id="PTHR33516:SF2">
    <property type="entry name" value="LEXA REPRESSOR-RELATED"/>
    <property type="match status" value="1"/>
</dbReference>
<dbReference type="Pfam" id="PF01726">
    <property type="entry name" value="LexA_DNA_bind"/>
    <property type="match status" value="1"/>
</dbReference>
<dbReference type="Pfam" id="PF00717">
    <property type="entry name" value="Peptidase_S24"/>
    <property type="match status" value="1"/>
</dbReference>
<dbReference type="PRINTS" id="PR00726">
    <property type="entry name" value="LEXASERPTASE"/>
</dbReference>
<dbReference type="SUPFAM" id="SSF51306">
    <property type="entry name" value="LexA/Signal peptidase"/>
    <property type="match status" value="1"/>
</dbReference>
<dbReference type="SUPFAM" id="SSF46785">
    <property type="entry name" value="Winged helix' DNA-binding domain"/>
    <property type="match status" value="1"/>
</dbReference>
<sequence>MLTRKQQELLLFIHGTNEGNPGVPPSFDEMKDALDLASKSGIHRLITALEERGFIRRLPNRARALEVIKLPEAYAGASQVRRGFSPTVIEGSLGKLASPPPAPKPAPPAEAASVAVPVMGRIAAGVPISAIQNNMHDISVPVEMIGSGEHYALEIKGDSMIEAGILDGDTVIIRNGSTASPGDIVVALIDDEEATLKRFRRKGASIALEAANPAYETRIFGPDRVKIQGRLVGLIRRYH</sequence>
<accession>P61605</accession>
<reference key="1">
    <citation type="submission" date="2000-03" db="EMBL/GenBank/DDBJ databases">
        <title>The lexA gene of Agrobacterium tumefaciens.</title>
        <authorList>
            <person name="Campoy S."/>
            <person name="Tapias A."/>
            <person name="Mazon G."/>
            <person name="Barbe J."/>
        </authorList>
    </citation>
    <scope>NUCLEOTIDE SEQUENCE [GENOMIC DNA]</scope>
</reference>
<comment type="function">
    <text evidence="1">Represses a number of genes involved in the response to DNA damage (SOS response), including recA and lexA. In the presence of single-stranded DNA, RecA interacts with LexA causing an autocatalytic cleavage which disrupts the DNA-binding part of LexA, leading to derepression of the SOS regulon and eventually DNA repair.</text>
</comment>
<comment type="catalytic activity">
    <reaction evidence="1">
        <text>Hydrolysis of Ala-|-Gly bond in repressor LexA.</text>
        <dbReference type="EC" id="3.4.21.88"/>
    </reaction>
</comment>
<comment type="subunit">
    <text evidence="1">Homodimer.</text>
</comment>
<comment type="similarity">
    <text evidence="1">Belongs to the peptidase S24 family.</text>
</comment>
<protein>
    <recommendedName>
        <fullName evidence="1">LexA repressor</fullName>
        <ecNumber evidence="1">3.4.21.88</ecNumber>
    </recommendedName>
</protein>
<organism>
    <name type="scientific">Rhizobium radiobacter</name>
    <name type="common">Agrobacterium tumefaciens</name>
    <name type="synonym">Agrobacterium radiobacter</name>
    <dbReference type="NCBI Taxonomy" id="358"/>
    <lineage>
        <taxon>Bacteria</taxon>
        <taxon>Pseudomonadati</taxon>
        <taxon>Pseudomonadota</taxon>
        <taxon>Alphaproteobacteria</taxon>
        <taxon>Hyphomicrobiales</taxon>
        <taxon>Rhizobiaceae</taxon>
        <taxon>Rhizobium/Agrobacterium group</taxon>
        <taxon>Agrobacterium</taxon>
        <taxon>Agrobacterium tumefaciens complex</taxon>
    </lineage>
</organism>
<gene>
    <name evidence="1" type="primary">lexA</name>
</gene>
<name>LEXA_RHIRD</name>
<feature type="chain" id="PRO_0000169999" description="LexA repressor">
    <location>
        <begin position="1"/>
        <end position="239"/>
    </location>
</feature>
<feature type="DNA-binding region" description="H-T-H motif" evidence="1">
    <location>
        <begin position="27"/>
        <end position="47"/>
    </location>
</feature>
<feature type="active site" description="For autocatalytic cleavage activity" evidence="1">
    <location>
        <position position="159"/>
    </location>
</feature>
<feature type="active site" description="For autocatalytic cleavage activity" evidence="1">
    <location>
        <position position="197"/>
    </location>
</feature>
<feature type="site" description="Cleavage; by autolysis" evidence="1">
    <location>
        <begin position="124"/>
        <end position="125"/>
    </location>
</feature>
<keyword id="KW-0068">Autocatalytic cleavage</keyword>
<keyword id="KW-0227">DNA damage</keyword>
<keyword id="KW-0234">DNA repair</keyword>
<keyword id="KW-0235">DNA replication</keyword>
<keyword id="KW-0238">DNA-binding</keyword>
<keyword id="KW-0378">Hydrolase</keyword>
<keyword id="KW-0678">Repressor</keyword>
<keyword id="KW-0742">SOS response</keyword>
<keyword id="KW-0804">Transcription</keyword>
<keyword id="KW-0805">Transcription regulation</keyword>